<organism>
    <name type="scientific">Methanococcus maripaludis (strain DSM 14266 / JCM 13030 / NBRC 101832 / S2 / LL)</name>
    <dbReference type="NCBI Taxonomy" id="267377"/>
    <lineage>
        <taxon>Archaea</taxon>
        <taxon>Methanobacteriati</taxon>
        <taxon>Methanobacteriota</taxon>
        <taxon>Methanomada group</taxon>
        <taxon>Methanococci</taxon>
        <taxon>Methanococcales</taxon>
        <taxon>Methanococcaceae</taxon>
        <taxon>Methanococcus</taxon>
    </lineage>
</organism>
<name>RL4_METMP</name>
<accession>P60846</accession>
<reference key="1">
    <citation type="journal article" date="2004" name="J. Bacteriol.">
        <title>Complete genome sequence of the genetically tractable hydrogenotrophic methanogen Methanococcus maripaludis.</title>
        <authorList>
            <person name="Hendrickson E.L."/>
            <person name="Kaul R."/>
            <person name="Zhou Y."/>
            <person name="Bovee D."/>
            <person name="Chapman P."/>
            <person name="Chung J."/>
            <person name="Conway de Macario E."/>
            <person name="Dodsworth J.A."/>
            <person name="Gillett W."/>
            <person name="Graham D.E."/>
            <person name="Hackett M."/>
            <person name="Haydock A.K."/>
            <person name="Kang A."/>
            <person name="Land M.L."/>
            <person name="Levy R."/>
            <person name="Lie T.J."/>
            <person name="Major T.A."/>
            <person name="Moore B.C."/>
            <person name="Porat I."/>
            <person name="Palmeiri A."/>
            <person name="Rouse G."/>
            <person name="Saenphimmachak C."/>
            <person name="Soell D."/>
            <person name="Van Dien S."/>
            <person name="Wang T."/>
            <person name="Whitman W.B."/>
            <person name="Xia Q."/>
            <person name="Zhang Y."/>
            <person name="Larimer F.W."/>
            <person name="Olson M.V."/>
            <person name="Leigh J.A."/>
        </authorList>
    </citation>
    <scope>NUCLEOTIDE SEQUENCE [LARGE SCALE GENOMIC DNA]</scope>
    <source>
        <strain>DSM 14266 / JCM 13030 / NBRC 101832 / S2 / LL</strain>
    </source>
</reference>
<evidence type="ECO:0000255" key="1">
    <source>
        <dbReference type="HAMAP-Rule" id="MF_01328"/>
    </source>
</evidence>
<evidence type="ECO:0000305" key="2"/>
<dbReference type="EMBL" id="BX950229">
    <property type="protein sequence ID" value="CAF31100.1"/>
    <property type="molecule type" value="Genomic_DNA"/>
</dbReference>
<dbReference type="RefSeq" id="WP_011171488.1">
    <property type="nucleotide sequence ID" value="NC_005791.1"/>
</dbReference>
<dbReference type="SMR" id="P60846"/>
<dbReference type="STRING" id="267377.MMP1544"/>
<dbReference type="EnsemblBacteria" id="CAF31100">
    <property type="protein sequence ID" value="CAF31100"/>
    <property type="gene ID" value="MMP1544"/>
</dbReference>
<dbReference type="GeneID" id="10983122"/>
<dbReference type="KEGG" id="mmp:MMP1544"/>
<dbReference type="PATRIC" id="fig|267377.15.peg.1581"/>
<dbReference type="eggNOG" id="arCOG04071">
    <property type="taxonomic scope" value="Archaea"/>
</dbReference>
<dbReference type="HOGENOM" id="CLU_026535_0_0_2"/>
<dbReference type="OrthoDB" id="10737at2157"/>
<dbReference type="Proteomes" id="UP000000590">
    <property type="component" value="Chromosome"/>
</dbReference>
<dbReference type="GO" id="GO:1990904">
    <property type="term" value="C:ribonucleoprotein complex"/>
    <property type="evidence" value="ECO:0007669"/>
    <property type="project" value="UniProtKB-KW"/>
</dbReference>
<dbReference type="GO" id="GO:0005840">
    <property type="term" value="C:ribosome"/>
    <property type="evidence" value="ECO:0007669"/>
    <property type="project" value="UniProtKB-KW"/>
</dbReference>
<dbReference type="GO" id="GO:0019843">
    <property type="term" value="F:rRNA binding"/>
    <property type="evidence" value="ECO:0007669"/>
    <property type="project" value="UniProtKB-UniRule"/>
</dbReference>
<dbReference type="GO" id="GO:0003735">
    <property type="term" value="F:structural constituent of ribosome"/>
    <property type="evidence" value="ECO:0007669"/>
    <property type="project" value="InterPro"/>
</dbReference>
<dbReference type="GO" id="GO:0006412">
    <property type="term" value="P:translation"/>
    <property type="evidence" value="ECO:0007669"/>
    <property type="project" value="UniProtKB-UniRule"/>
</dbReference>
<dbReference type="Gene3D" id="3.40.1370.10">
    <property type="match status" value="1"/>
</dbReference>
<dbReference type="HAMAP" id="MF_01328_A">
    <property type="entry name" value="Ribosomal_uL4_A"/>
    <property type="match status" value="1"/>
</dbReference>
<dbReference type="InterPro" id="IPR002136">
    <property type="entry name" value="Ribosomal_uL4"/>
</dbReference>
<dbReference type="InterPro" id="IPR023574">
    <property type="entry name" value="Ribosomal_uL4_dom_sf"/>
</dbReference>
<dbReference type="InterPro" id="IPR013000">
    <property type="entry name" value="Ribosomal_uL4_euk/arc_CS"/>
</dbReference>
<dbReference type="InterPro" id="IPR045240">
    <property type="entry name" value="Ribosomal_uL4_euk/arch"/>
</dbReference>
<dbReference type="InterPro" id="IPR019970">
    <property type="entry name" value="Ribosomall_uL4-arc"/>
</dbReference>
<dbReference type="NCBIfam" id="TIGR03672">
    <property type="entry name" value="rpl4p_arch"/>
    <property type="match status" value="1"/>
</dbReference>
<dbReference type="PANTHER" id="PTHR19431">
    <property type="entry name" value="60S RIBOSOMAL PROTEIN L4"/>
    <property type="match status" value="1"/>
</dbReference>
<dbReference type="Pfam" id="PF00573">
    <property type="entry name" value="Ribosomal_L4"/>
    <property type="match status" value="1"/>
</dbReference>
<dbReference type="SUPFAM" id="SSF52166">
    <property type="entry name" value="Ribosomal protein L4"/>
    <property type="match status" value="1"/>
</dbReference>
<dbReference type="PROSITE" id="PS00939">
    <property type="entry name" value="RIBOSOMAL_L1E"/>
    <property type="match status" value="1"/>
</dbReference>
<comment type="function">
    <text evidence="1">One of the primary rRNA binding proteins, this protein initially binds near the 5'-end of the 23S rRNA. It is important during the early stages of 50S assembly. It makes multiple contacts with different domains of the 23S rRNA in the assembled 50S subunit and ribosome.</text>
</comment>
<comment type="function">
    <text evidence="1">Forms part of the polypeptide exit tunnel.</text>
</comment>
<comment type="subunit">
    <text evidence="1">Part of the 50S ribosomal subunit.</text>
</comment>
<comment type="similarity">
    <text evidence="1">Belongs to the universal ribosomal protein uL4 family.</text>
</comment>
<protein>
    <recommendedName>
        <fullName evidence="1">Large ribosomal subunit protein uL4</fullName>
    </recommendedName>
    <alternativeName>
        <fullName evidence="2">50S ribosomal protein L4</fullName>
    </alternativeName>
</protein>
<gene>
    <name evidence="1" type="primary">rpl4</name>
    <name type="ordered locus">MMP1544</name>
</gene>
<keyword id="KW-1185">Reference proteome</keyword>
<keyword id="KW-0687">Ribonucleoprotein</keyword>
<keyword id="KW-0689">Ribosomal protein</keyword>
<keyword id="KW-0694">RNA-binding</keyword>
<keyword id="KW-0699">rRNA-binding</keyword>
<sequence>MNVKVYNLDGSEKGDIELPAVFEAEYRPDLIKRAVISSLTAKLQPKGCDAFAGYRTSAKSIGKGHGKARVRRTAQGAGAFVPQAVGGRRAHPPKVEKILFERINRKEKLKALASAIAASANPEIVSARGHKIEGVPSLPLVVNAEFESLVKTKEVLEVFKTLKLDADLERAKDGVKIRAGRGKLRGRKYIKPKSVLVVVGDACEAITASRNLAGVDVITANDLSAIHIAPGTMAGRLTLWTENAIEKINGRF</sequence>
<proteinExistence type="inferred from homology"/>
<feature type="chain" id="PRO_0000129335" description="Large ribosomal subunit protein uL4">
    <location>
        <begin position="1"/>
        <end position="252"/>
    </location>
</feature>